<name>PSD_SHEPC</name>
<reference key="1">
    <citation type="submission" date="2007-04" db="EMBL/GenBank/DDBJ databases">
        <title>Complete sequence of Shewanella putrefaciens CN-32.</title>
        <authorList>
            <consortium name="US DOE Joint Genome Institute"/>
            <person name="Copeland A."/>
            <person name="Lucas S."/>
            <person name="Lapidus A."/>
            <person name="Barry K."/>
            <person name="Detter J.C."/>
            <person name="Glavina del Rio T."/>
            <person name="Hammon N."/>
            <person name="Israni S."/>
            <person name="Dalin E."/>
            <person name="Tice H."/>
            <person name="Pitluck S."/>
            <person name="Chain P."/>
            <person name="Malfatti S."/>
            <person name="Shin M."/>
            <person name="Vergez L."/>
            <person name="Schmutz J."/>
            <person name="Larimer F."/>
            <person name="Land M."/>
            <person name="Hauser L."/>
            <person name="Kyrpides N."/>
            <person name="Mikhailova N."/>
            <person name="Romine M.F."/>
            <person name="Fredrickson J."/>
            <person name="Tiedje J."/>
            <person name="Richardson P."/>
        </authorList>
    </citation>
    <scope>NUCLEOTIDE SEQUENCE [LARGE SCALE GENOMIC DNA]</scope>
    <source>
        <strain>CN-32 / ATCC BAA-453</strain>
    </source>
</reference>
<proteinExistence type="inferred from homology"/>
<feature type="chain" id="PRO_1000026586" description="Phosphatidylserine decarboxylase beta chain" evidence="1">
    <location>
        <begin position="1"/>
        <end position="251"/>
    </location>
</feature>
<feature type="chain" id="PRO_1000026587" description="Phosphatidylserine decarboxylase alpha chain" evidence="1">
    <location>
        <begin position="252"/>
        <end position="289"/>
    </location>
</feature>
<feature type="active site" description="Charge relay system; for autoendoproteolytic cleavage activity" evidence="1">
    <location>
        <position position="89"/>
    </location>
</feature>
<feature type="active site" description="Charge relay system; for autoendoproteolytic cleavage activity" evidence="1">
    <location>
        <position position="146"/>
    </location>
</feature>
<feature type="active site" description="Charge relay system; for autoendoproteolytic cleavage activity" evidence="1">
    <location>
        <position position="252"/>
    </location>
</feature>
<feature type="active site" description="Schiff-base intermediate with substrate; via pyruvic acid; for decarboxylase activity" evidence="1">
    <location>
        <position position="252"/>
    </location>
</feature>
<feature type="site" description="Cleavage (non-hydrolytic); by autocatalysis" evidence="1">
    <location>
        <begin position="251"/>
        <end position="252"/>
    </location>
</feature>
<feature type="modified residue" description="Pyruvic acid (Ser); by autocatalysis" evidence="1">
    <location>
        <position position="252"/>
    </location>
</feature>
<comment type="function">
    <text evidence="1">Catalyzes the formation of phosphatidylethanolamine (PtdEtn) from phosphatidylserine (PtdSer).</text>
</comment>
<comment type="catalytic activity">
    <reaction evidence="1">
        <text>a 1,2-diacyl-sn-glycero-3-phospho-L-serine + H(+) = a 1,2-diacyl-sn-glycero-3-phosphoethanolamine + CO2</text>
        <dbReference type="Rhea" id="RHEA:20828"/>
        <dbReference type="ChEBI" id="CHEBI:15378"/>
        <dbReference type="ChEBI" id="CHEBI:16526"/>
        <dbReference type="ChEBI" id="CHEBI:57262"/>
        <dbReference type="ChEBI" id="CHEBI:64612"/>
        <dbReference type="EC" id="4.1.1.65"/>
    </reaction>
</comment>
<comment type="cofactor">
    <cofactor evidence="1">
        <name>pyruvate</name>
        <dbReference type="ChEBI" id="CHEBI:15361"/>
    </cofactor>
    <text evidence="1">Binds 1 pyruvoyl group covalently per subunit.</text>
</comment>
<comment type="pathway">
    <text evidence="1">Phospholipid metabolism; phosphatidylethanolamine biosynthesis; phosphatidylethanolamine from CDP-diacylglycerol: step 2/2.</text>
</comment>
<comment type="subunit">
    <text evidence="1">Heterodimer of a large membrane-associated beta subunit and a small pyruvoyl-containing alpha subunit.</text>
</comment>
<comment type="subcellular location">
    <subcellularLocation>
        <location evidence="1">Cell membrane</location>
        <topology evidence="1">Peripheral membrane protein</topology>
    </subcellularLocation>
</comment>
<comment type="PTM">
    <text evidence="1">Is synthesized initially as an inactive proenzyme. Formation of the active enzyme involves a self-maturation process in which the active site pyruvoyl group is generated from an internal serine residue via an autocatalytic post-translational modification. Two non-identical subunits are generated from the proenzyme in this reaction, and the pyruvate is formed at the N-terminus of the alpha chain, which is derived from the carboxyl end of the proenzyme. The autoendoproteolytic cleavage occurs by a canonical serine protease mechanism, in which the side chain hydroxyl group of the serine supplies its oxygen atom to form the C-terminus of the beta chain, while the remainder of the serine residue undergoes an oxidative deamination to produce ammonia and the pyruvoyl prosthetic group on the alpha chain. During this reaction, the Ser that is part of the protease active site of the proenzyme becomes the pyruvoyl prosthetic group, which constitutes an essential element of the active site of the mature decarboxylase.</text>
</comment>
<comment type="similarity">
    <text evidence="1">Belongs to the phosphatidylserine decarboxylase family. PSD-B subfamily. Prokaryotic type I sub-subfamily.</text>
</comment>
<dbReference type="EC" id="4.1.1.65" evidence="1"/>
<dbReference type="EMBL" id="CP000681">
    <property type="protein sequence ID" value="ABP77001.1"/>
    <property type="molecule type" value="Genomic_DNA"/>
</dbReference>
<dbReference type="SMR" id="A4YAL8"/>
<dbReference type="STRING" id="319224.Sputcn32_3289"/>
<dbReference type="KEGG" id="spc:Sputcn32_3289"/>
<dbReference type="eggNOG" id="COG0688">
    <property type="taxonomic scope" value="Bacteria"/>
</dbReference>
<dbReference type="HOGENOM" id="CLU_029061_4_1_6"/>
<dbReference type="UniPathway" id="UPA00558">
    <property type="reaction ID" value="UER00616"/>
</dbReference>
<dbReference type="GO" id="GO:0005886">
    <property type="term" value="C:plasma membrane"/>
    <property type="evidence" value="ECO:0007669"/>
    <property type="project" value="UniProtKB-SubCell"/>
</dbReference>
<dbReference type="GO" id="GO:0004609">
    <property type="term" value="F:phosphatidylserine decarboxylase activity"/>
    <property type="evidence" value="ECO:0007669"/>
    <property type="project" value="UniProtKB-UniRule"/>
</dbReference>
<dbReference type="GO" id="GO:0006646">
    <property type="term" value="P:phosphatidylethanolamine biosynthetic process"/>
    <property type="evidence" value="ECO:0007669"/>
    <property type="project" value="UniProtKB-UniRule"/>
</dbReference>
<dbReference type="HAMAP" id="MF_00662">
    <property type="entry name" value="PS_decarb_PSD_B_type1"/>
    <property type="match status" value="1"/>
</dbReference>
<dbReference type="InterPro" id="IPR003817">
    <property type="entry name" value="PS_Dcarbxylase"/>
</dbReference>
<dbReference type="InterPro" id="IPR033177">
    <property type="entry name" value="PSD-B"/>
</dbReference>
<dbReference type="InterPro" id="IPR033178">
    <property type="entry name" value="PSD_type1_pro"/>
</dbReference>
<dbReference type="NCBIfam" id="TIGR00163">
    <property type="entry name" value="PS_decarb"/>
    <property type="match status" value="1"/>
</dbReference>
<dbReference type="PANTHER" id="PTHR10067">
    <property type="entry name" value="PHOSPHATIDYLSERINE DECARBOXYLASE"/>
    <property type="match status" value="1"/>
</dbReference>
<dbReference type="PANTHER" id="PTHR10067:SF6">
    <property type="entry name" value="PHOSPHATIDYLSERINE DECARBOXYLASE PROENZYME, MITOCHONDRIAL"/>
    <property type="match status" value="1"/>
</dbReference>
<dbReference type="Pfam" id="PF02666">
    <property type="entry name" value="PS_Dcarbxylase"/>
    <property type="match status" value="1"/>
</dbReference>
<evidence type="ECO:0000255" key="1">
    <source>
        <dbReference type="HAMAP-Rule" id="MF_00662"/>
    </source>
</evidence>
<organism>
    <name type="scientific">Shewanella putrefaciens (strain CN-32 / ATCC BAA-453)</name>
    <dbReference type="NCBI Taxonomy" id="319224"/>
    <lineage>
        <taxon>Bacteria</taxon>
        <taxon>Pseudomonadati</taxon>
        <taxon>Pseudomonadota</taxon>
        <taxon>Gammaproteobacteria</taxon>
        <taxon>Alteromonadales</taxon>
        <taxon>Shewanellaceae</taxon>
        <taxon>Shewanella</taxon>
    </lineage>
</organism>
<sequence length="289" mass="31743">MDKVKIALQYMLPKHLLSRLVGKLAAAEAGTLTTAAIKWFIKQYKIDMSEAAQSEPQAYKSFNDFFTRALKPGIRPINQHTNIMVHPVDGAVSQLGPIKEGRIFQAKGHHYSSLTLLGDQVQDAKRFEGGDFATIYLAPKDYHRIHMPIKGTLSKMTYVPGELFSVNPLTARHVPGLFARNERVVAIFETEHGPLAMVLVGATIVASIETVWAGTITPPTGKQVFTWEYPTVGPDAITLDKGDEMGRFKLGSTVVMLFAKDAIDTFAEGVEAEAVTRMGQAFANLNNPK</sequence>
<accession>A4YAL8</accession>
<protein>
    <recommendedName>
        <fullName evidence="1">Phosphatidylserine decarboxylase proenzyme</fullName>
        <ecNumber evidence="1">4.1.1.65</ecNumber>
    </recommendedName>
    <component>
        <recommendedName>
            <fullName evidence="1">Phosphatidylserine decarboxylase alpha chain</fullName>
        </recommendedName>
    </component>
    <component>
        <recommendedName>
            <fullName evidence="1">Phosphatidylserine decarboxylase beta chain</fullName>
        </recommendedName>
    </component>
</protein>
<keyword id="KW-1003">Cell membrane</keyword>
<keyword id="KW-0210">Decarboxylase</keyword>
<keyword id="KW-0444">Lipid biosynthesis</keyword>
<keyword id="KW-0443">Lipid metabolism</keyword>
<keyword id="KW-0456">Lyase</keyword>
<keyword id="KW-0472">Membrane</keyword>
<keyword id="KW-0594">Phospholipid biosynthesis</keyword>
<keyword id="KW-1208">Phospholipid metabolism</keyword>
<keyword id="KW-0670">Pyruvate</keyword>
<keyword id="KW-0865">Zymogen</keyword>
<gene>
    <name evidence="1" type="primary">psd</name>
    <name type="ordered locus">Sputcn32_3289</name>
</gene>